<name>RIBB_SYNC1</name>
<dbReference type="EC" id="4.1.99.12" evidence="1"/>
<dbReference type="EMBL" id="CP000142">
    <property type="protein sequence ID" value="ABA88139.1"/>
    <property type="molecule type" value="Genomic_DNA"/>
</dbReference>
<dbReference type="RefSeq" id="WP_011340605.1">
    <property type="nucleotide sequence ID" value="NC_007498.2"/>
</dbReference>
<dbReference type="SMR" id="Q3A668"/>
<dbReference type="STRING" id="338963.Pcar_0884"/>
<dbReference type="KEGG" id="pca:Pcar_0884"/>
<dbReference type="eggNOG" id="COG0108">
    <property type="taxonomic scope" value="Bacteria"/>
</dbReference>
<dbReference type="HOGENOM" id="CLU_020273_3_0_7"/>
<dbReference type="OrthoDB" id="9793111at2"/>
<dbReference type="UniPathway" id="UPA00275">
    <property type="reaction ID" value="UER00399"/>
</dbReference>
<dbReference type="Proteomes" id="UP000002534">
    <property type="component" value="Chromosome"/>
</dbReference>
<dbReference type="GO" id="GO:0005829">
    <property type="term" value="C:cytosol"/>
    <property type="evidence" value="ECO:0007669"/>
    <property type="project" value="TreeGrafter"/>
</dbReference>
<dbReference type="GO" id="GO:0008686">
    <property type="term" value="F:3,4-dihydroxy-2-butanone-4-phosphate synthase activity"/>
    <property type="evidence" value="ECO:0007669"/>
    <property type="project" value="UniProtKB-UniRule"/>
</dbReference>
<dbReference type="GO" id="GO:0000287">
    <property type="term" value="F:magnesium ion binding"/>
    <property type="evidence" value="ECO:0007669"/>
    <property type="project" value="UniProtKB-UniRule"/>
</dbReference>
<dbReference type="GO" id="GO:0030145">
    <property type="term" value="F:manganese ion binding"/>
    <property type="evidence" value="ECO:0007669"/>
    <property type="project" value="UniProtKB-UniRule"/>
</dbReference>
<dbReference type="GO" id="GO:0009231">
    <property type="term" value="P:riboflavin biosynthetic process"/>
    <property type="evidence" value="ECO:0007669"/>
    <property type="project" value="UniProtKB-UniRule"/>
</dbReference>
<dbReference type="FunFam" id="3.90.870.10:FF:000002">
    <property type="entry name" value="3,4-dihydroxy-2-butanone 4-phosphate synthase"/>
    <property type="match status" value="1"/>
</dbReference>
<dbReference type="Gene3D" id="3.90.870.10">
    <property type="entry name" value="DHBP synthase"/>
    <property type="match status" value="1"/>
</dbReference>
<dbReference type="HAMAP" id="MF_00180">
    <property type="entry name" value="RibB"/>
    <property type="match status" value="1"/>
</dbReference>
<dbReference type="InterPro" id="IPR017945">
    <property type="entry name" value="DHBP_synth_RibB-like_a/b_dom"/>
</dbReference>
<dbReference type="InterPro" id="IPR000422">
    <property type="entry name" value="DHBP_synthase_RibB"/>
</dbReference>
<dbReference type="NCBIfam" id="TIGR00506">
    <property type="entry name" value="ribB"/>
    <property type="match status" value="1"/>
</dbReference>
<dbReference type="PANTHER" id="PTHR21327:SF38">
    <property type="entry name" value="3,4-DIHYDROXY-2-BUTANONE 4-PHOSPHATE SYNTHASE"/>
    <property type="match status" value="1"/>
</dbReference>
<dbReference type="PANTHER" id="PTHR21327">
    <property type="entry name" value="GTP CYCLOHYDROLASE II-RELATED"/>
    <property type="match status" value="1"/>
</dbReference>
<dbReference type="Pfam" id="PF00926">
    <property type="entry name" value="DHBP_synthase"/>
    <property type="match status" value="1"/>
</dbReference>
<dbReference type="SUPFAM" id="SSF55821">
    <property type="entry name" value="YrdC/RibB"/>
    <property type="match status" value="1"/>
</dbReference>
<proteinExistence type="inferred from homology"/>
<evidence type="ECO:0000255" key="1">
    <source>
        <dbReference type="HAMAP-Rule" id="MF_00180"/>
    </source>
</evidence>
<gene>
    <name evidence="1" type="primary">ribB</name>
    <name type="ordered locus">Pcar_0884</name>
</gene>
<protein>
    <recommendedName>
        <fullName evidence="1">3,4-dihydroxy-2-butanone 4-phosphate synthase</fullName>
        <shortName evidence="1">DHBP synthase</shortName>
        <ecNumber evidence="1">4.1.99.12</ecNumber>
    </recommendedName>
</protein>
<feature type="chain" id="PRO_1000040617" description="3,4-dihydroxy-2-butanone 4-phosphate synthase">
    <location>
        <begin position="1"/>
        <end position="217"/>
    </location>
</feature>
<feature type="binding site" evidence="1">
    <location>
        <begin position="37"/>
        <end position="38"/>
    </location>
    <ligand>
        <name>D-ribulose 5-phosphate</name>
        <dbReference type="ChEBI" id="CHEBI:58121"/>
    </ligand>
</feature>
<feature type="binding site" evidence="1">
    <location>
        <position position="38"/>
    </location>
    <ligand>
        <name>Mg(2+)</name>
        <dbReference type="ChEBI" id="CHEBI:18420"/>
        <label>1</label>
    </ligand>
</feature>
<feature type="binding site" evidence="1">
    <location>
        <position position="38"/>
    </location>
    <ligand>
        <name>Mg(2+)</name>
        <dbReference type="ChEBI" id="CHEBI:18420"/>
        <label>2</label>
    </ligand>
</feature>
<feature type="binding site" evidence="1">
    <location>
        <position position="42"/>
    </location>
    <ligand>
        <name>D-ribulose 5-phosphate</name>
        <dbReference type="ChEBI" id="CHEBI:58121"/>
    </ligand>
</feature>
<feature type="binding site" evidence="1">
    <location>
        <begin position="150"/>
        <end position="154"/>
    </location>
    <ligand>
        <name>D-ribulose 5-phosphate</name>
        <dbReference type="ChEBI" id="CHEBI:58121"/>
    </ligand>
</feature>
<feature type="binding site" evidence="1">
    <location>
        <position position="153"/>
    </location>
    <ligand>
        <name>Mg(2+)</name>
        <dbReference type="ChEBI" id="CHEBI:18420"/>
        <label>2</label>
    </ligand>
</feature>
<feature type="binding site" evidence="1">
    <location>
        <position position="174"/>
    </location>
    <ligand>
        <name>D-ribulose 5-phosphate</name>
        <dbReference type="ChEBI" id="CHEBI:58121"/>
    </ligand>
</feature>
<feature type="site" description="Essential for catalytic activity" evidence="1">
    <location>
        <position position="136"/>
    </location>
</feature>
<feature type="site" description="Essential for catalytic activity" evidence="1">
    <location>
        <position position="174"/>
    </location>
</feature>
<comment type="function">
    <text evidence="1">Catalyzes the conversion of D-ribulose 5-phosphate to formate and 3,4-dihydroxy-2-butanone 4-phosphate.</text>
</comment>
<comment type="catalytic activity">
    <reaction evidence="1">
        <text>D-ribulose 5-phosphate = (2S)-2-hydroxy-3-oxobutyl phosphate + formate + H(+)</text>
        <dbReference type="Rhea" id="RHEA:18457"/>
        <dbReference type="ChEBI" id="CHEBI:15378"/>
        <dbReference type="ChEBI" id="CHEBI:15740"/>
        <dbReference type="ChEBI" id="CHEBI:58121"/>
        <dbReference type="ChEBI" id="CHEBI:58830"/>
        <dbReference type="EC" id="4.1.99.12"/>
    </reaction>
</comment>
<comment type="cofactor">
    <cofactor evidence="1">
        <name>Mg(2+)</name>
        <dbReference type="ChEBI" id="CHEBI:18420"/>
    </cofactor>
    <cofactor evidence="1">
        <name>Mn(2+)</name>
        <dbReference type="ChEBI" id="CHEBI:29035"/>
    </cofactor>
    <text evidence="1">Binds 2 divalent metal cations per subunit. Magnesium or manganese.</text>
</comment>
<comment type="pathway">
    <text evidence="1">Cofactor biosynthesis; riboflavin biosynthesis; 2-hydroxy-3-oxobutyl phosphate from D-ribulose 5-phosphate: step 1/1.</text>
</comment>
<comment type="subunit">
    <text evidence="1">Homodimer.</text>
</comment>
<comment type="similarity">
    <text evidence="1">Belongs to the DHBP synthase family.</text>
</comment>
<organism>
    <name type="scientific">Syntrophotalea carbinolica (strain DSM 2380 / NBRC 103641 / GraBd1)</name>
    <name type="common">Pelobacter carbinolicus</name>
    <dbReference type="NCBI Taxonomy" id="338963"/>
    <lineage>
        <taxon>Bacteria</taxon>
        <taxon>Pseudomonadati</taxon>
        <taxon>Thermodesulfobacteriota</taxon>
        <taxon>Desulfuromonadia</taxon>
        <taxon>Desulfuromonadales</taxon>
        <taxon>Syntrophotaleaceae</taxon>
        <taxon>Syntrophotalea</taxon>
    </lineage>
</organism>
<reference key="1">
    <citation type="submission" date="2005-10" db="EMBL/GenBank/DDBJ databases">
        <title>Complete sequence of Pelobacter carbinolicus DSM 2380.</title>
        <authorList>
            <person name="Copeland A."/>
            <person name="Lucas S."/>
            <person name="Lapidus A."/>
            <person name="Barry K."/>
            <person name="Detter J.C."/>
            <person name="Glavina T."/>
            <person name="Hammon N."/>
            <person name="Israni S."/>
            <person name="Pitluck S."/>
            <person name="Chertkov O."/>
            <person name="Schmutz J."/>
            <person name="Larimer F."/>
            <person name="Land M."/>
            <person name="Kyrpides N."/>
            <person name="Ivanova N."/>
            <person name="Richardson P."/>
        </authorList>
    </citation>
    <scope>NUCLEOTIDE SEQUENCE [LARGE SCALE GENOMIC DNA]</scope>
    <source>
        <strain>DSM 2380 / NBRC 103641 / GraBd1</strain>
    </source>
</reference>
<accession>Q3A668</accession>
<sequence>MSQSLLDRFGTPLERVHLAIDRLRQGRGVLLVDDENRENEGDLIFPAETITPAQMAMMIRECSGIVCLCLTEDKLKQLELPQMVSDNTSANQTAFTLSIEARQGVTTGVSAADRVTTIRTAVADDCRPDDLARPGHVFPLRARPGGVLTRRGHTEGTVDLMRMAGYKPAGVLCELTNEDGTMARLPEIITFAERHYLSVVSIEDLALALESHMEKSA</sequence>
<keyword id="KW-0456">Lyase</keyword>
<keyword id="KW-0460">Magnesium</keyword>
<keyword id="KW-0464">Manganese</keyword>
<keyword id="KW-0479">Metal-binding</keyword>
<keyword id="KW-1185">Reference proteome</keyword>
<keyword id="KW-0686">Riboflavin biosynthesis</keyword>